<sequence length="411" mass="46716">MTPNSMTENGLPAWDKPKPCPDGEPEWKLVGMSEACLHRKSHPERRGPLKHEQSPLIQASWTSSIFHLDHDDVSDQSAPSAQAFQTEEKKCKGYIPSYLDKDELCVVCGDKATGYHYRCITCEGCKGFFRRTIQKNLHPSYSCKYEGKCVIDKVTRNQCQECRFKKCIYVGMATDLVLDDSKRLAKRKLIEENREKRRREELQRSMGHKPEPTDQEWELIKTVTEAHVATNAQGSHWKQKRKFLPEDIGQAPIVNAPEGGKVDLEAFSHFTKIITPAITRVVDFAKKLPMFCELPCEDQIILLKGCCMEIMSLRAAVRYDPESETLTLNGEMAVTRRQLKNGGLGVVSDAIFDLGMSLSSFNLDDTEVALLQAVLLMSSDRPGLACVERIEKYQDSFLLAFEHYINYRRNS</sequence>
<comment type="function">
    <text>Nuclear hormone receptor that can act as a repressor or activator of transcription. High affinity receptor for thyroid hormones, including triiodothyronine and thyroxine.</text>
</comment>
<comment type="subunit">
    <text evidence="1 2">Binds DNA as a dimer; homodimer and heterodimer with RXRA (By similarity). Interacts with the coactivators NCOA1/SRC1, NCOA2/GRIP1, NCOA7 and MED1/TRAP220 in a ligand-inducible manner. Interacts with the corepressor NCOR1 in absence of ligand (By similarity). Interacts with C1D (By similarity). Interacts with NR2F6; the interaction impairs the binding of the THRB homodimer and THRB:RXRB heterodimer to T3 response elements (By similarity). Interacts with PRMT2 and THRSP (By similarity). Interacts with TACC1; this interaction is decreased in the presence of thyroid hormone T3 (By similarity).</text>
</comment>
<comment type="subcellular location">
    <subcellularLocation>
        <location>Nucleus</location>
    </subcellularLocation>
</comment>
<comment type="domain">
    <text>Composed of three domains: a modulating N-terminal domain, a DNA-binding domain and a C-terminal ligand-binding domain.</text>
</comment>
<comment type="similarity">
    <text evidence="6">Belongs to the nuclear hormone receptor family. NR1 subfamily.</text>
</comment>
<dbReference type="EMBL" id="Z68307">
    <property type="protein sequence ID" value="CAA92649.1"/>
    <property type="molecule type" value="mRNA"/>
</dbReference>
<dbReference type="SMR" id="Q28571"/>
<dbReference type="STRING" id="9940.ENSOARP00000004757"/>
<dbReference type="PaxDb" id="9940-ENSOARP00000004757"/>
<dbReference type="eggNOG" id="KOG3575">
    <property type="taxonomic scope" value="Eukaryota"/>
</dbReference>
<dbReference type="Proteomes" id="UP000002356">
    <property type="component" value="Unplaced"/>
</dbReference>
<dbReference type="GO" id="GO:0090575">
    <property type="term" value="C:RNA polymerase II transcription regulator complex"/>
    <property type="evidence" value="ECO:0007669"/>
    <property type="project" value="TreeGrafter"/>
</dbReference>
<dbReference type="GO" id="GO:0004879">
    <property type="term" value="F:nuclear receptor activity"/>
    <property type="evidence" value="ECO:0000250"/>
    <property type="project" value="UniProtKB"/>
</dbReference>
<dbReference type="GO" id="GO:0000978">
    <property type="term" value="F:RNA polymerase II cis-regulatory region sequence-specific DNA binding"/>
    <property type="evidence" value="ECO:0007669"/>
    <property type="project" value="TreeGrafter"/>
</dbReference>
<dbReference type="GO" id="GO:0070324">
    <property type="term" value="F:thyroid hormone binding"/>
    <property type="evidence" value="ECO:0000250"/>
    <property type="project" value="UniProtKB"/>
</dbReference>
<dbReference type="GO" id="GO:0008270">
    <property type="term" value="F:zinc ion binding"/>
    <property type="evidence" value="ECO:0007669"/>
    <property type="project" value="UniProtKB-KW"/>
</dbReference>
<dbReference type="GO" id="GO:0030154">
    <property type="term" value="P:cell differentiation"/>
    <property type="evidence" value="ECO:0007669"/>
    <property type="project" value="TreeGrafter"/>
</dbReference>
<dbReference type="GO" id="GO:0000122">
    <property type="term" value="P:negative regulation of transcription by RNA polymerase II"/>
    <property type="evidence" value="ECO:0007669"/>
    <property type="project" value="TreeGrafter"/>
</dbReference>
<dbReference type="GO" id="GO:0045944">
    <property type="term" value="P:positive regulation of transcription by RNA polymerase II"/>
    <property type="evidence" value="ECO:0007669"/>
    <property type="project" value="TreeGrafter"/>
</dbReference>
<dbReference type="GO" id="GO:0048384">
    <property type="term" value="P:retinoic acid receptor signaling pathway"/>
    <property type="evidence" value="ECO:0007669"/>
    <property type="project" value="TreeGrafter"/>
</dbReference>
<dbReference type="GO" id="GO:0002154">
    <property type="term" value="P:thyroid hormone receptor signaling pathway"/>
    <property type="evidence" value="ECO:0007669"/>
    <property type="project" value="TreeGrafter"/>
</dbReference>
<dbReference type="CDD" id="cd06961">
    <property type="entry name" value="NR_DBD_TR"/>
    <property type="match status" value="1"/>
</dbReference>
<dbReference type="CDD" id="cd06935">
    <property type="entry name" value="NR_LBD_TR"/>
    <property type="match status" value="1"/>
</dbReference>
<dbReference type="FunFam" id="1.10.565.10:FF:000006">
    <property type="entry name" value="Thyroid hormone receptor beta 2"/>
    <property type="match status" value="1"/>
</dbReference>
<dbReference type="FunFam" id="3.30.50.10:FF:000011">
    <property type="entry name" value="Thyroid hormone receptor beta isoform"/>
    <property type="match status" value="1"/>
</dbReference>
<dbReference type="Gene3D" id="3.30.50.10">
    <property type="entry name" value="Erythroid Transcription Factor GATA-1, subunit A"/>
    <property type="match status" value="1"/>
</dbReference>
<dbReference type="Gene3D" id="1.10.565.10">
    <property type="entry name" value="Retinoid X Receptor"/>
    <property type="match status" value="1"/>
</dbReference>
<dbReference type="InterPro" id="IPR035500">
    <property type="entry name" value="NHR-like_dom_sf"/>
</dbReference>
<dbReference type="InterPro" id="IPR000536">
    <property type="entry name" value="Nucl_hrmn_rcpt_lig-bd"/>
</dbReference>
<dbReference type="InterPro" id="IPR050234">
    <property type="entry name" value="Nuclear_hormone_rcpt_NR1"/>
</dbReference>
<dbReference type="InterPro" id="IPR001723">
    <property type="entry name" value="Nuclear_hrmn_rcpt"/>
</dbReference>
<dbReference type="InterPro" id="IPR001728">
    <property type="entry name" value="ThyrH_rcpt"/>
</dbReference>
<dbReference type="InterPro" id="IPR001628">
    <property type="entry name" value="Znf_hrmn_rcpt"/>
</dbReference>
<dbReference type="InterPro" id="IPR013088">
    <property type="entry name" value="Znf_NHR/GATA"/>
</dbReference>
<dbReference type="PANTHER" id="PTHR24082">
    <property type="entry name" value="NUCLEAR HORMONE RECEPTOR"/>
    <property type="match status" value="1"/>
</dbReference>
<dbReference type="PANTHER" id="PTHR24082:SF210">
    <property type="entry name" value="THYROID HORMONE RECEPTOR BETA"/>
    <property type="match status" value="1"/>
</dbReference>
<dbReference type="Pfam" id="PF00104">
    <property type="entry name" value="Hormone_recep"/>
    <property type="match status" value="1"/>
</dbReference>
<dbReference type="Pfam" id="PF00105">
    <property type="entry name" value="zf-C4"/>
    <property type="match status" value="1"/>
</dbReference>
<dbReference type="PRINTS" id="PR00398">
    <property type="entry name" value="STRDHORMONER"/>
</dbReference>
<dbReference type="PRINTS" id="PR00047">
    <property type="entry name" value="STROIDFINGER"/>
</dbReference>
<dbReference type="PRINTS" id="PR00546">
    <property type="entry name" value="THYROIDHORMR"/>
</dbReference>
<dbReference type="SMART" id="SM00430">
    <property type="entry name" value="HOLI"/>
    <property type="match status" value="1"/>
</dbReference>
<dbReference type="SMART" id="SM00399">
    <property type="entry name" value="ZnF_C4"/>
    <property type="match status" value="1"/>
</dbReference>
<dbReference type="SUPFAM" id="SSF57716">
    <property type="entry name" value="Glucocorticoid receptor-like (DNA-binding domain)"/>
    <property type="match status" value="1"/>
</dbReference>
<dbReference type="SUPFAM" id="SSF48508">
    <property type="entry name" value="Nuclear receptor ligand-binding domain"/>
    <property type="match status" value="1"/>
</dbReference>
<dbReference type="PROSITE" id="PS51843">
    <property type="entry name" value="NR_LBD"/>
    <property type="match status" value="1"/>
</dbReference>
<dbReference type="PROSITE" id="PS00031">
    <property type="entry name" value="NUCLEAR_REC_DBD_1"/>
    <property type="match status" value="1"/>
</dbReference>
<dbReference type="PROSITE" id="PS51030">
    <property type="entry name" value="NUCLEAR_REC_DBD_2"/>
    <property type="match status" value="1"/>
</dbReference>
<keyword id="KW-0238">DNA-binding</keyword>
<keyword id="KW-0479">Metal-binding</keyword>
<keyword id="KW-0539">Nucleus</keyword>
<keyword id="KW-0675">Receptor</keyword>
<keyword id="KW-1185">Reference proteome</keyword>
<keyword id="KW-0804">Transcription</keyword>
<keyword id="KW-0805">Transcription regulation</keyword>
<keyword id="KW-0862">Zinc</keyword>
<keyword id="KW-0863">Zinc-finger</keyword>
<proteinExistence type="evidence at transcript level"/>
<evidence type="ECO:0000250" key="1"/>
<evidence type="ECO:0000250" key="2">
    <source>
        <dbReference type="UniProtKB" id="P10828"/>
    </source>
</evidence>
<evidence type="ECO:0000255" key="3">
    <source>
        <dbReference type="PROSITE-ProRule" id="PRU00407"/>
    </source>
</evidence>
<evidence type="ECO:0000255" key="4">
    <source>
        <dbReference type="PROSITE-ProRule" id="PRU01189"/>
    </source>
</evidence>
<evidence type="ECO:0000256" key="5">
    <source>
        <dbReference type="SAM" id="MobiDB-lite"/>
    </source>
</evidence>
<evidence type="ECO:0000305" key="6"/>
<gene>
    <name type="primary">THRB</name>
    <name type="synonym">NR1A2</name>
</gene>
<accession>Q28571</accession>
<reference key="1">
    <citation type="journal article" date="1996" name="Thyroid">
        <title>Cloning of the alpha and beta ovine thyroid hormone receptor cDNAs.</title>
        <authorList>
            <person name="Tucker M.A."/>
            <person name="Polk D.H."/>
        </authorList>
    </citation>
    <scope>NUCLEOTIDE SEQUENCE [MRNA]</scope>
    <source>
        <tissue>Liver</tissue>
    </source>
</reference>
<protein>
    <recommendedName>
        <fullName>Thyroid hormone receptor beta</fullName>
    </recommendedName>
    <alternativeName>
        <fullName>Nuclear receptor subfamily 1 group A member 2</fullName>
    </alternativeName>
</protein>
<organism>
    <name type="scientific">Ovis aries</name>
    <name type="common">Sheep</name>
    <dbReference type="NCBI Taxonomy" id="9940"/>
    <lineage>
        <taxon>Eukaryota</taxon>
        <taxon>Metazoa</taxon>
        <taxon>Chordata</taxon>
        <taxon>Craniata</taxon>
        <taxon>Vertebrata</taxon>
        <taxon>Euteleostomi</taxon>
        <taxon>Mammalia</taxon>
        <taxon>Eutheria</taxon>
        <taxon>Laurasiatheria</taxon>
        <taxon>Artiodactyla</taxon>
        <taxon>Ruminantia</taxon>
        <taxon>Pecora</taxon>
        <taxon>Bovidae</taxon>
        <taxon>Caprinae</taxon>
        <taxon>Ovis</taxon>
    </lineage>
</organism>
<name>THB_SHEEP</name>
<feature type="chain" id="PRO_0000053452" description="Thyroid hormone receptor beta">
    <location>
        <begin position="1"/>
        <end position="411" status="greater than"/>
    </location>
</feature>
<feature type="domain" description="NR LBD" evidence="4">
    <location>
        <begin position="215"/>
        <end position="411" status="greater than"/>
    </location>
</feature>
<feature type="DNA-binding region" description="Nuclear receptor" evidence="3">
    <location>
        <begin position="105"/>
        <end position="179"/>
    </location>
</feature>
<feature type="zinc finger region" description="NR C4-type" evidence="3">
    <location>
        <begin position="105"/>
        <end position="125"/>
    </location>
</feature>
<feature type="zinc finger region" description="NR C4-type" evidence="3">
    <location>
        <begin position="143"/>
        <end position="167"/>
    </location>
</feature>
<feature type="region of interest" description="Modulating">
    <location>
        <begin position="1"/>
        <end position="104"/>
    </location>
</feature>
<feature type="region of interest" description="Disordered" evidence="5">
    <location>
        <begin position="1"/>
        <end position="24"/>
    </location>
</feature>
<feature type="region of interest" description="Interaction with NR2F6" evidence="1">
    <location>
        <begin position="242"/>
        <end position="411" status="greater than"/>
    </location>
</feature>
<feature type="compositionally biased region" description="Basic and acidic residues" evidence="5">
    <location>
        <begin position="15"/>
        <end position="24"/>
    </location>
</feature>
<feature type="binding site" evidence="2">
    <location>
        <position position="105"/>
    </location>
    <ligand>
        <name>Zn(2+)</name>
        <dbReference type="ChEBI" id="CHEBI:29105"/>
        <label>1</label>
    </ligand>
</feature>
<feature type="binding site" evidence="2">
    <location>
        <position position="108"/>
    </location>
    <ligand>
        <name>Zn(2+)</name>
        <dbReference type="ChEBI" id="CHEBI:29105"/>
        <label>1</label>
    </ligand>
</feature>
<feature type="binding site" evidence="2">
    <location>
        <position position="122"/>
    </location>
    <ligand>
        <name>Zn(2+)</name>
        <dbReference type="ChEBI" id="CHEBI:29105"/>
        <label>1</label>
    </ligand>
</feature>
<feature type="binding site" evidence="2">
    <location>
        <position position="125"/>
    </location>
    <ligand>
        <name>Zn(2+)</name>
        <dbReference type="ChEBI" id="CHEBI:29105"/>
        <label>1</label>
    </ligand>
</feature>
<feature type="binding site" evidence="2">
    <location>
        <position position="143"/>
    </location>
    <ligand>
        <name>Zn(2+)</name>
        <dbReference type="ChEBI" id="CHEBI:29105"/>
        <label>2</label>
    </ligand>
</feature>
<feature type="binding site" evidence="2">
    <location>
        <position position="149"/>
    </location>
    <ligand>
        <name>Zn(2+)</name>
        <dbReference type="ChEBI" id="CHEBI:29105"/>
        <label>2</label>
    </ligand>
</feature>
<feature type="binding site" evidence="2">
    <location>
        <position position="159"/>
    </location>
    <ligand>
        <name>Zn(2+)</name>
        <dbReference type="ChEBI" id="CHEBI:29105"/>
        <label>2</label>
    </ligand>
</feature>
<feature type="binding site" evidence="2">
    <location>
        <position position="162"/>
    </location>
    <ligand>
        <name>Zn(2+)</name>
        <dbReference type="ChEBI" id="CHEBI:29105"/>
        <label>2</label>
    </ligand>
</feature>
<feature type="binding site" evidence="2">
    <location>
        <position position="280"/>
    </location>
    <ligand>
        <name>3,3',5-triiodo-L-thyronine</name>
        <dbReference type="ChEBI" id="CHEBI:533015"/>
    </ligand>
</feature>
<feature type="binding site" evidence="2">
    <location>
        <position position="280"/>
    </location>
    <ligand>
        <name>L-thyroxine</name>
        <dbReference type="ChEBI" id="CHEBI:58448"/>
    </ligand>
</feature>
<feature type="binding site" evidence="2">
    <location>
        <position position="329"/>
    </location>
    <ligand>
        <name>3,3',5-triiodo-L-thyronine</name>
        <dbReference type="ChEBI" id="CHEBI:533015"/>
    </ligand>
</feature>
<feature type="binding site" evidence="2">
    <location>
        <position position="329"/>
    </location>
    <ligand>
        <name>L-thyroxine</name>
        <dbReference type="ChEBI" id="CHEBI:58448"/>
    </ligand>
</feature>
<feature type="non-terminal residue">
    <location>
        <position position="411"/>
    </location>
</feature>